<protein>
    <recommendedName>
        <fullName>Vomeronasal type-1 receptor 90</fullName>
    </recommendedName>
    <alternativeName>
        <fullName>Pheromone receptor VN6</fullName>
    </alternativeName>
    <alternativeName>
        <fullName>Vomeronasal receptor 6</fullName>
    </alternativeName>
    <alternativeName>
        <fullName>Vomeronasal type-1 receptor A16</fullName>
    </alternativeName>
</protein>
<dbReference type="EMBL" id="U36898">
    <property type="protein sequence ID" value="AAC52287.1"/>
    <property type="molecule type" value="mRNA"/>
</dbReference>
<dbReference type="EMBL" id="AY510354">
    <property type="protein sequence ID" value="AAR88021.1"/>
    <property type="molecule type" value="mRNA"/>
</dbReference>
<dbReference type="PIR" id="I61748">
    <property type="entry name" value="I61748"/>
</dbReference>
<dbReference type="RefSeq" id="NP_714951.2">
    <property type="nucleotide sequence ID" value="NM_153729.3"/>
</dbReference>
<dbReference type="SMR" id="Q5J3F6"/>
<dbReference type="GlyCosmos" id="Q5J3F6">
    <property type="glycosylation" value="1 site, No reported glycans"/>
</dbReference>
<dbReference type="GlyGen" id="Q5J3F6">
    <property type="glycosylation" value="1 site"/>
</dbReference>
<dbReference type="PaxDb" id="10116-ENSRNOP00000023832"/>
<dbReference type="Ensembl" id="ENSRNOT00000083168.2">
    <property type="protein sequence ID" value="ENSRNOP00000071886.1"/>
    <property type="gene ID" value="ENSRNOG00000058136.2"/>
</dbReference>
<dbReference type="Ensembl" id="ENSRNOT00000108893.1">
    <property type="protein sequence ID" value="ENSRNOP00000087854.1"/>
    <property type="gene ID" value="ENSRNOG00000058136.2"/>
</dbReference>
<dbReference type="GeneID" id="266771"/>
<dbReference type="KEGG" id="rno:266771"/>
<dbReference type="UCSC" id="RGD:708509">
    <property type="organism name" value="rat"/>
</dbReference>
<dbReference type="AGR" id="RGD:708509"/>
<dbReference type="CTD" id="266771"/>
<dbReference type="RGD" id="708509">
    <property type="gene designation" value="Vom1r90"/>
</dbReference>
<dbReference type="eggNOG" id="ENOG502SNRJ">
    <property type="taxonomic scope" value="Eukaryota"/>
</dbReference>
<dbReference type="GeneTree" id="ENSGT01030000234553"/>
<dbReference type="HOGENOM" id="CLU_058641_0_0_1"/>
<dbReference type="InParanoid" id="Q5J3F6"/>
<dbReference type="OMA" id="SVITIRY"/>
<dbReference type="OrthoDB" id="9606139at2759"/>
<dbReference type="PhylomeDB" id="Q5J3F6"/>
<dbReference type="PRO" id="PR:Q5J3F6"/>
<dbReference type="Proteomes" id="UP000002494">
    <property type="component" value="Chromosome 4"/>
</dbReference>
<dbReference type="GO" id="GO:0005886">
    <property type="term" value="C:plasma membrane"/>
    <property type="evidence" value="ECO:0007669"/>
    <property type="project" value="UniProtKB-SubCell"/>
</dbReference>
<dbReference type="GO" id="GO:0016503">
    <property type="term" value="F:pheromone receptor activity"/>
    <property type="evidence" value="ECO:0007669"/>
    <property type="project" value="InterPro"/>
</dbReference>
<dbReference type="GO" id="GO:0019236">
    <property type="term" value="P:response to pheromone"/>
    <property type="evidence" value="ECO:0007669"/>
    <property type="project" value="UniProtKB-KW"/>
</dbReference>
<dbReference type="GO" id="GO:0007606">
    <property type="term" value="P:sensory perception of chemical stimulus"/>
    <property type="evidence" value="ECO:0007669"/>
    <property type="project" value="UniProtKB-ARBA"/>
</dbReference>
<dbReference type="CDD" id="cd13949">
    <property type="entry name" value="7tm_V1R_pheromone"/>
    <property type="match status" value="1"/>
</dbReference>
<dbReference type="FunFam" id="1.20.1070.10:FF:000051">
    <property type="entry name" value="Vomeronasal type-1 receptor"/>
    <property type="match status" value="1"/>
</dbReference>
<dbReference type="Gene3D" id="1.20.1070.10">
    <property type="entry name" value="Rhodopsin 7-helix transmembrane proteins"/>
    <property type="match status" value="1"/>
</dbReference>
<dbReference type="InterPro" id="IPR017452">
    <property type="entry name" value="GPCR_Rhodpsn_7TM"/>
</dbReference>
<dbReference type="InterPro" id="IPR004072">
    <property type="entry name" value="Vmron_rcpt_1"/>
</dbReference>
<dbReference type="PANTHER" id="PTHR24062">
    <property type="entry name" value="VOMERONASAL TYPE-1 RECEPTOR"/>
    <property type="match status" value="1"/>
</dbReference>
<dbReference type="Pfam" id="PF03402">
    <property type="entry name" value="V1R"/>
    <property type="match status" value="1"/>
</dbReference>
<dbReference type="PRINTS" id="PR01534">
    <property type="entry name" value="VOMERONASL1R"/>
</dbReference>
<dbReference type="SUPFAM" id="SSF81321">
    <property type="entry name" value="Family A G protein-coupled receptor-like"/>
    <property type="match status" value="1"/>
</dbReference>
<dbReference type="PROSITE" id="PS50262">
    <property type="entry name" value="G_PROTEIN_RECEP_F1_2"/>
    <property type="match status" value="1"/>
</dbReference>
<keyword id="KW-1003">Cell membrane</keyword>
<keyword id="KW-1015">Disulfide bond</keyword>
<keyword id="KW-0297">G-protein coupled receptor</keyword>
<keyword id="KW-0325">Glycoprotein</keyword>
<keyword id="KW-0472">Membrane</keyword>
<keyword id="KW-0589">Pheromone response</keyword>
<keyword id="KW-0675">Receptor</keyword>
<keyword id="KW-1185">Reference proteome</keyword>
<keyword id="KW-0807">Transducer</keyword>
<keyword id="KW-0812">Transmembrane</keyword>
<keyword id="KW-1133">Transmembrane helix</keyword>
<reference evidence="5 6" key="1">
    <citation type="journal article" date="1995" name="Cell">
        <title>A novel family of genes encoding putative pheromone receptors in mammals.</title>
        <authorList>
            <person name="Dulac C."/>
            <person name="Axel R."/>
        </authorList>
    </citation>
    <scope>NUCLEOTIDE SEQUENCE [MRNA]</scope>
    <scope>PUTATIVE FUNCTION</scope>
    <scope>TISSUE SPECIFICITY</scope>
    <source>
        <strain evidence="6">Sprague-Dawley</strain>
        <tissue evidence="6">Vomeronasal organ</tissue>
    </source>
</reference>
<reference evidence="7" key="2">
    <citation type="submission" date="2003-12" db="EMBL/GenBank/DDBJ databases">
        <title>Rat vomeronasal receptors.</title>
        <authorList>
            <person name="Capello L."/>
            <person name="Rodriguez I."/>
        </authorList>
    </citation>
    <scope>NUCLEOTIDE SEQUENCE [MRNA]</scope>
</reference>
<organism>
    <name type="scientific">Rattus norvegicus</name>
    <name type="common">Rat</name>
    <dbReference type="NCBI Taxonomy" id="10116"/>
    <lineage>
        <taxon>Eukaryota</taxon>
        <taxon>Metazoa</taxon>
        <taxon>Chordata</taxon>
        <taxon>Craniata</taxon>
        <taxon>Vertebrata</taxon>
        <taxon>Euteleostomi</taxon>
        <taxon>Mammalia</taxon>
        <taxon>Eutheria</taxon>
        <taxon>Euarchontoglires</taxon>
        <taxon>Glires</taxon>
        <taxon>Rodentia</taxon>
        <taxon>Myomorpha</taxon>
        <taxon>Muroidea</taxon>
        <taxon>Muridae</taxon>
        <taxon>Murinae</taxon>
        <taxon>Rattus</taxon>
    </lineage>
</organism>
<sequence length="310" mass="35324">MRRISTLYGVVDKQAIFFSEVVIGISFNSILFLFHIFQFLLERRLRITDLIISLLALIHLGMLTVMGFRAVDIFASQNVWNDIKCKSLAHLHRLLRGLSLCATCLLSIFQAITLSPRSSCLAKFKYKSTQHSLCSLLVLWAFYMSCGTHYSFTIVADYNFSSRSLIFVTESCIILPMDYITRHLFFILGIFRDVSFIGLMALSSGYMVALLCRHRKQAQHLHRTSLSPKASPEQRATRTILLLMSFFVLMYCLDCTISASRLMHNGEPIHHSIQMMVSNSYATLSPLLLIVTENRISRFLKSLLGRTVDA</sequence>
<gene>
    <name type="primary">Vom1r90</name>
    <name type="synonym">V1ra16</name>
</gene>
<evidence type="ECO:0000250" key="1">
    <source>
        <dbReference type="UniProtKB" id="Q8VIC6"/>
    </source>
</evidence>
<evidence type="ECO:0000255" key="2"/>
<evidence type="ECO:0000255" key="3">
    <source>
        <dbReference type="PROSITE-ProRule" id="PRU00521"/>
    </source>
</evidence>
<evidence type="ECO:0000269" key="4">
    <source>
    </source>
</evidence>
<evidence type="ECO:0000305" key="5"/>
<evidence type="ECO:0000312" key="6">
    <source>
        <dbReference type="EMBL" id="AAC52287.1"/>
    </source>
</evidence>
<evidence type="ECO:0000312" key="7">
    <source>
        <dbReference type="EMBL" id="AAR88021.1"/>
    </source>
</evidence>
<comment type="function">
    <text evidence="1 4">Putative pheromone receptor implicated in the regulation of social as well as reproductive behavior.</text>
</comment>
<comment type="subcellular location">
    <subcellularLocation>
        <location evidence="5">Cell membrane</location>
        <topology evidence="2">Multi-pass membrane protein</topology>
    </subcellularLocation>
</comment>
<comment type="tissue specificity">
    <text evidence="4">Expressed in 1-4% of neurons of the vomeronasal organ. Only one pheromone receptor gene may be expressed in a particular neuron. Not expressed in the main olfactory epithelium.</text>
</comment>
<comment type="similarity">
    <text evidence="3">Belongs to the G-protein coupled receptor 1 family.</text>
</comment>
<name>V1R90_RAT</name>
<proteinExistence type="evidence at transcript level"/>
<accession>Q5J3F6</accession>
<accession>Q62855</accession>
<feature type="chain" id="PRO_0000239972" description="Vomeronasal type-1 receptor 90">
    <location>
        <begin position="1"/>
        <end position="310"/>
    </location>
</feature>
<feature type="topological domain" description="Extracellular" evidence="2">
    <location>
        <begin position="1"/>
        <end position="20"/>
    </location>
</feature>
<feature type="transmembrane region" description="Helical; Name=1" evidence="2">
    <location>
        <begin position="21"/>
        <end position="41"/>
    </location>
</feature>
<feature type="topological domain" description="Cytoplasmic" evidence="2">
    <location>
        <begin position="42"/>
        <end position="46"/>
    </location>
</feature>
<feature type="transmembrane region" description="Helical; Name=2" evidence="2">
    <location>
        <begin position="47"/>
        <end position="67"/>
    </location>
</feature>
<feature type="topological domain" description="Extracellular" evidence="2">
    <location>
        <begin position="68"/>
        <end position="93"/>
    </location>
</feature>
<feature type="transmembrane region" description="Helical; Name=3" evidence="2">
    <location>
        <begin position="94"/>
        <end position="114"/>
    </location>
</feature>
<feature type="topological domain" description="Cytoplasmic" evidence="2">
    <location>
        <begin position="115"/>
        <end position="135"/>
    </location>
</feature>
<feature type="transmembrane region" description="Helical; Name=4" evidence="2">
    <location>
        <begin position="136"/>
        <end position="156"/>
    </location>
</feature>
<feature type="topological domain" description="Extracellular" evidence="2">
    <location>
        <begin position="157"/>
        <end position="183"/>
    </location>
</feature>
<feature type="transmembrane region" description="Helical; Name=5" evidence="2">
    <location>
        <begin position="184"/>
        <end position="204"/>
    </location>
</feature>
<feature type="topological domain" description="Cytoplasmic" evidence="2">
    <location>
        <begin position="205"/>
        <end position="238"/>
    </location>
</feature>
<feature type="transmembrane region" description="Helical; Name=6" evidence="2">
    <location>
        <begin position="239"/>
        <end position="259"/>
    </location>
</feature>
<feature type="topological domain" description="Extracellular" evidence="2">
    <location>
        <begin position="260"/>
        <end position="271"/>
    </location>
</feature>
<feature type="transmembrane region" description="Helical; Name=7" evidence="2">
    <location>
        <begin position="272"/>
        <end position="292"/>
    </location>
</feature>
<feature type="topological domain" description="Cytoplasmic" evidence="2">
    <location>
        <begin position="293"/>
        <end position="310"/>
    </location>
</feature>
<feature type="glycosylation site" description="N-linked (GlcNAc...) asparagine" evidence="2">
    <location>
        <position position="159"/>
    </location>
</feature>
<feature type="disulfide bond" evidence="3">
    <location>
        <begin position="85"/>
        <end position="172"/>
    </location>
</feature>
<feature type="sequence conflict" description="In Ref. 1; AAC52287." evidence="5" ref="1">
    <original>H</original>
    <variation>D</variation>
    <location>
        <position position="183"/>
    </location>
</feature>